<reference key="1">
    <citation type="journal article" date="2008" name="Antimicrob. Agents Chemother.">
        <title>Whole-genome pyrosequencing of an epidemic multidrug-resistant Acinetobacter baumannii strain belonging to the European clone II group.</title>
        <authorList>
            <person name="Iacono M."/>
            <person name="Villa L."/>
            <person name="Fortini D."/>
            <person name="Bordoni R."/>
            <person name="Imperi F."/>
            <person name="Bonnal R.J."/>
            <person name="Sicheritz-Ponten T."/>
            <person name="De Bellis G."/>
            <person name="Visca P."/>
            <person name="Cassone A."/>
            <person name="Carattoli A."/>
        </authorList>
    </citation>
    <scope>NUCLEOTIDE SEQUENCE [LARGE SCALE GENOMIC DNA]</scope>
    <source>
        <strain>ACICU</strain>
    </source>
</reference>
<protein>
    <recommendedName>
        <fullName evidence="1">Acetyl-coenzyme A carboxylase carboxyl transferase subunit beta</fullName>
        <shortName evidence="1">ACCase subunit beta</shortName>
        <shortName evidence="1">Acetyl-CoA carboxylase carboxyltransferase subunit beta</shortName>
        <ecNumber evidence="1">2.1.3.15</ecNumber>
    </recommendedName>
</protein>
<proteinExistence type="inferred from homology"/>
<feature type="chain" id="PRO_0000389656" description="Acetyl-coenzyme A carboxylase carboxyl transferase subunit beta">
    <location>
        <begin position="1"/>
        <end position="298"/>
    </location>
</feature>
<feature type="domain" description="CoA carboxyltransferase N-terminal" evidence="2">
    <location>
        <begin position="41"/>
        <end position="298"/>
    </location>
</feature>
<feature type="zinc finger region" description="C4-type" evidence="1">
    <location>
        <begin position="45"/>
        <end position="67"/>
    </location>
</feature>
<feature type="region of interest" description="Disordered" evidence="3">
    <location>
        <begin position="1"/>
        <end position="21"/>
    </location>
</feature>
<feature type="binding site" evidence="1">
    <location>
        <position position="45"/>
    </location>
    <ligand>
        <name>Zn(2+)</name>
        <dbReference type="ChEBI" id="CHEBI:29105"/>
    </ligand>
</feature>
<feature type="binding site" evidence="1">
    <location>
        <position position="48"/>
    </location>
    <ligand>
        <name>Zn(2+)</name>
        <dbReference type="ChEBI" id="CHEBI:29105"/>
    </ligand>
</feature>
<feature type="binding site" evidence="1">
    <location>
        <position position="64"/>
    </location>
    <ligand>
        <name>Zn(2+)</name>
        <dbReference type="ChEBI" id="CHEBI:29105"/>
    </ligand>
</feature>
<feature type="binding site" evidence="1">
    <location>
        <position position="67"/>
    </location>
    <ligand>
        <name>Zn(2+)</name>
        <dbReference type="ChEBI" id="CHEBI:29105"/>
    </ligand>
</feature>
<sequence length="298" mass="32972">MNQEVKSGKVLSPSTPWTQRPVPGIEVADEQQTLKATFTEPTIECPECHALVTRTAISFNAYVCPQCDEHLRMKARDRLNWFFDNVVAELGQEFSAKDPLKFVDSKPYPDRMREAQTKTGETEALIAMQGNLNGVDMIACAFEFDFMGGSMGTVVGDRFVKAAELAIEKRQPLICFAASGGARMQEGMLSLMQMARTSAAIQKLKDAGLPYIVVLTHPVYGGVTASLAMLGDIHIAEPKAMIGFAGKRVIEQTVRETLEEPFQRAEYLLDHGVVDQIVHRHALRDTVSRLVSKLMNLP</sequence>
<accession>B2HYI9</accession>
<organism>
    <name type="scientific">Acinetobacter baumannii (strain ACICU)</name>
    <dbReference type="NCBI Taxonomy" id="405416"/>
    <lineage>
        <taxon>Bacteria</taxon>
        <taxon>Pseudomonadati</taxon>
        <taxon>Pseudomonadota</taxon>
        <taxon>Gammaproteobacteria</taxon>
        <taxon>Moraxellales</taxon>
        <taxon>Moraxellaceae</taxon>
        <taxon>Acinetobacter</taxon>
        <taxon>Acinetobacter calcoaceticus/baumannii complex</taxon>
    </lineage>
</organism>
<name>ACCD_ACIBC</name>
<evidence type="ECO:0000255" key="1">
    <source>
        <dbReference type="HAMAP-Rule" id="MF_01395"/>
    </source>
</evidence>
<evidence type="ECO:0000255" key="2">
    <source>
        <dbReference type="PROSITE-ProRule" id="PRU01136"/>
    </source>
</evidence>
<evidence type="ECO:0000256" key="3">
    <source>
        <dbReference type="SAM" id="MobiDB-lite"/>
    </source>
</evidence>
<keyword id="KW-0067">ATP-binding</keyword>
<keyword id="KW-0963">Cytoplasm</keyword>
<keyword id="KW-0275">Fatty acid biosynthesis</keyword>
<keyword id="KW-0276">Fatty acid metabolism</keyword>
<keyword id="KW-0444">Lipid biosynthesis</keyword>
<keyword id="KW-0443">Lipid metabolism</keyword>
<keyword id="KW-0479">Metal-binding</keyword>
<keyword id="KW-0547">Nucleotide-binding</keyword>
<keyword id="KW-0808">Transferase</keyword>
<keyword id="KW-0862">Zinc</keyword>
<keyword id="KW-0863">Zinc-finger</keyword>
<gene>
    <name evidence="1" type="primary">accD</name>
    <name type="ordered locus">ACICU_03116</name>
</gene>
<comment type="function">
    <text evidence="1">Component of the acetyl coenzyme A carboxylase (ACC) complex. Biotin carboxylase (BC) catalyzes the carboxylation of biotin on its carrier protein (BCCP) and then the CO(2) group is transferred by the transcarboxylase to acetyl-CoA to form malonyl-CoA.</text>
</comment>
<comment type="catalytic activity">
    <reaction evidence="1">
        <text>N(6)-carboxybiotinyl-L-lysyl-[protein] + acetyl-CoA = N(6)-biotinyl-L-lysyl-[protein] + malonyl-CoA</text>
        <dbReference type="Rhea" id="RHEA:54728"/>
        <dbReference type="Rhea" id="RHEA-COMP:10505"/>
        <dbReference type="Rhea" id="RHEA-COMP:10506"/>
        <dbReference type="ChEBI" id="CHEBI:57288"/>
        <dbReference type="ChEBI" id="CHEBI:57384"/>
        <dbReference type="ChEBI" id="CHEBI:83144"/>
        <dbReference type="ChEBI" id="CHEBI:83145"/>
        <dbReference type="EC" id="2.1.3.15"/>
    </reaction>
</comment>
<comment type="cofactor">
    <cofactor evidence="1">
        <name>Zn(2+)</name>
        <dbReference type="ChEBI" id="CHEBI:29105"/>
    </cofactor>
    <text evidence="1">Binds 1 zinc ion per subunit.</text>
</comment>
<comment type="pathway">
    <text evidence="1">Lipid metabolism; malonyl-CoA biosynthesis; malonyl-CoA from acetyl-CoA: step 1/1.</text>
</comment>
<comment type="subunit">
    <text evidence="1">Acetyl-CoA carboxylase is a heterohexamer composed of biotin carboxyl carrier protein (AccB), biotin carboxylase (AccC) and two subunits each of ACCase subunit alpha (AccA) and ACCase subunit beta (AccD).</text>
</comment>
<comment type="subcellular location">
    <subcellularLocation>
        <location evidence="1">Cytoplasm</location>
    </subcellularLocation>
</comment>
<comment type="similarity">
    <text evidence="1">Belongs to the AccD/PCCB family.</text>
</comment>
<dbReference type="EC" id="2.1.3.15" evidence="1"/>
<dbReference type="EMBL" id="CP000863">
    <property type="protein sequence ID" value="ACC58428.1"/>
    <property type="molecule type" value="Genomic_DNA"/>
</dbReference>
<dbReference type="RefSeq" id="WP_001071168.1">
    <property type="nucleotide sequence ID" value="NZ_CP031380.1"/>
</dbReference>
<dbReference type="SMR" id="B2HYI9"/>
<dbReference type="GeneID" id="92895146"/>
<dbReference type="KEGG" id="abc:ACICU_03116"/>
<dbReference type="HOGENOM" id="CLU_015486_1_0_6"/>
<dbReference type="UniPathway" id="UPA00655">
    <property type="reaction ID" value="UER00711"/>
</dbReference>
<dbReference type="Proteomes" id="UP000008839">
    <property type="component" value="Chromosome"/>
</dbReference>
<dbReference type="GO" id="GO:0009329">
    <property type="term" value="C:acetate CoA-transferase complex"/>
    <property type="evidence" value="ECO:0007669"/>
    <property type="project" value="TreeGrafter"/>
</dbReference>
<dbReference type="GO" id="GO:0003989">
    <property type="term" value="F:acetyl-CoA carboxylase activity"/>
    <property type="evidence" value="ECO:0007669"/>
    <property type="project" value="InterPro"/>
</dbReference>
<dbReference type="GO" id="GO:0005524">
    <property type="term" value="F:ATP binding"/>
    <property type="evidence" value="ECO:0007669"/>
    <property type="project" value="UniProtKB-KW"/>
</dbReference>
<dbReference type="GO" id="GO:0016743">
    <property type="term" value="F:carboxyl- or carbamoyltransferase activity"/>
    <property type="evidence" value="ECO:0007669"/>
    <property type="project" value="UniProtKB-UniRule"/>
</dbReference>
<dbReference type="GO" id="GO:0008270">
    <property type="term" value="F:zinc ion binding"/>
    <property type="evidence" value="ECO:0007669"/>
    <property type="project" value="UniProtKB-UniRule"/>
</dbReference>
<dbReference type="GO" id="GO:0006633">
    <property type="term" value="P:fatty acid biosynthetic process"/>
    <property type="evidence" value="ECO:0007669"/>
    <property type="project" value="UniProtKB-KW"/>
</dbReference>
<dbReference type="GO" id="GO:2001295">
    <property type="term" value="P:malonyl-CoA biosynthetic process"/>
    <property type="evidence" value="ECO:0007669"/>
    <property type="project" value="UniProtKB-UniRule"/>
</dbReference>
<dbReference type="Gene3D" id="3.90.226.10">
    <property type="entry name" value="2-enoyl-CoA Hydratase, Chain A, domain 1"/>
    <property type="match status" value="1"/>
</dbReference>
<dbReference type="HAMAP" id="MF_01395">
    <property type="entry name" value="AcetylCoA_CT_beta"/>
    <property type="match status" value="1"/>
</dbReference>
<dbReference type="InterPro" id="IPR034733">
    <property type="entry name" value="AcCoA_carboxyl_beta"/>
</dbReference>
<dbReference type="InterPro" id="IPR000438">
    <property type="entry name" value="Acetyl_CoA_COase_Trfase_b_su"/>
</dbReference>
<dbReference type="InterPro" id="IPR029045">
    <property type="entry name" value="ClpP/crotonase-like_dom_sf"/>
</dbReference>
<dbReference type="InterPro" id="IPR011762">
    <property type="entry name" value="COA_CT_N"/>
</dbReference>
<dbReference type="NCBIfam" id="TIGR00515">
    <property type="entry name" value="accD"/>
    <property type="match status" value="1"/>
</dbReference>
<dbReference type="PANTHER" id="PTHR42995">
    <property type="entry name" value="ACETYL-COENZYME A CARBOXYLASE CARBOXYL TRANSFERASE SUBUNIT BETA, CHLOROPLASTIC"/>
    <property type="match status" value="1"/>
</dbReference>
<dbReference type="PANTHER" id="PTHR42995:SF5">
    <property type="entry name" value="ACETYL-COENZYME A CARBOXYLASE CARBOXYL TRANSFERASE SUBUNIT BETA, CHLOROPLASTIC"/>
    <property type="match status" value="1"/>
</dbReference>
<dbReference type="Pfam" id="PF01039">
    <property type="entry name" value="Carboxyl_trans"/>
    <property type="match status" value="1"/>
</dbReference>
<dbReference type="PRINTS" id="PR01070">
    <property type="entry name" value="ACCCTRFRASEB"/>
</dbReference>
<dbReference type="SUPFAM" id="SSF52096">
    <property type="entry name" value="ClpP/crotonase"/>
    <property type="match status" value="1"/>
</dbReference>
<dbReference type="PROSITE" id="PS50980">
    <property type="entry name" value="COA_CT_NTER"/>
    <property type="match status" value="1"/>
</dbReference>